<proteinExistence type="inferred from homology"/>
<feature type="chain" id="PRO_0000323070" description="Small ribosomal subunit protein uS5">
    <location>
        <begin position="1"/>
        <end position="168"/>
    </location>
</feature>
<feature type="domain" description="S5 DRBM" evidence="1">
    <location>
        <begin position="13"/>
        <end position="76"/>
    </location>
</feature>
<gene>
    <name evidence="1" type="primary">rpsE</name>
    <name type="ordered locus">RBAM_001580</name>
</gene>
<evidence type="ECO:0000255" key="1">
    <source>
        <dbReference type="HAMAP-Rule" id="MF_01307"/>
    </source>
</evidence>
<evidence type="ECO:0000305" key="2"/>
<keyword id="KW-0687">Ribonucleoprotein</keyword>
<keyword id="KW-0689">Ribosomal protein</keyword>
<keyword id="KW-0694">RNA-binding</keyword>
<keyword id="KW-0699">rRNA-binding</keyword>
<sequence length="168" mass="17881">MIMRRIDPSKLELEERLVTVNRVAKVVKGGRRFRFAALVVVGDKNGHVGFGTGKAQEVPEAIRKAVEDAKKNLIEVPMVGTTIPHEIIGRFGAGNILLKPASEGTGVIAGGPVRAVLELAGVADILSKSLGSNTPINMIRATLQGLSELKRAEEVAKLRGKSVEELLG</sequence>
<name>RS5_BACVZ</name>
<dbReference type="EMBL" id="CP000560">
    <property type="protein sequence ID" value="ABS72581.1"/>
    <property type="molecule type" value="Genomic_DNA"/>
</dbReference>
<dbReference type="SMR" id="A7Z0Q5"/>
<dbReference type="KEGG" id="bay:RBAM_001580"/>
<dbReference type="HOGENOM" id="CLU_065898_2_2_9"/>
<dbReference type="Proteomes" id="UP000001120">
    <property type="component" value="Chromosome"/>
</dbReference>
<dbReference type="GO" id="GO:0015935">
    <property type="term" value="C:small ribosomal subunit"/>
    <property type="evidence" value="ECO:0007669"/>
    <property type="project" value="InterPro"/>
</dbReference>
<dbReference type="GO" id="GO:0019843">
    <property type="term" value="F:rRNA binding"/>
    <property type="evidence" value="ECO:0007669"/>
    <property type="project" value="UniProtKB-UniRule"/>
</dbReference>
<dbReference type="GO" id="GO:0003735">
    <property type="term" value="F:structural constituent of ribosome"/>
    <property type="evidence" value="ECO:0007669"/>
    <property type="project" value="InterPro"/>
</dbReference>
<dbReference type="GO" id="GO:0006412">
    <property type="term" value="P:translation"/>
    <property type="evidence" value="ECO:0007669"/>
    <property type="project" value="UniProtKB-UniRule"/>
</dbReference>
<dbReference type="FunFam" id="3.30.160.20:FF:000001">
    <property type="entry name" value="30S ribosomal protein S5"/>
    <property type="match status" value="1"/>
</dbReference>
<dbReference type="FunFam" id="3.30.230.10:FF:000002">
    <property type="entry name" value="30S ribosomal protein S5"/>
    <property type="match status" value="1"/>
</dbReference>
<dbReference type="Gene3D" id="3.30.160.20">
    <property type="match status" value="1"/>
</dbReference>
<dbReference type="Gene3D" id="3.30.230.10">
    <property type="match status" value="1"/>
</dbReference>
<dbReference type="HAMAP" id="MF_01307_B">
    <property type="entry name" value="Ribosomal_uS5_B"/>
    <property type="match status" value="1"/>
</dbReference>
<dbReference type="InterPro" id="IPR020568">
    <property type="entry name" value="Ribosomal_Su5_D2-typ_SF"/>
</dbReference>
<dbReference type="InterPro" id="IPR000851">
    <property type="entry name" value="Ribosomal_uS5"/>
</dbReference>
<dbReference type="InterPro" id="IPR005712">
    <property type="entry name" value="Ribosomal_uS5_bac-type"/>
</dbReference>
<dbReference type="InterPro" id="IPR005324">
    <property type="entry name" value="Ribosomal_uS5_C"/>
</dbReference>
<dbReference type="InterPro" id="IPR013810">
    <property type="entry name" value="Ribosomal_uS5_N"/>
</dbReference>
<dbReference type="InterPro" id="IPR018192">
    <property type="entry name" value="Ribosomal_uS5_N_CS"/>
</dbReference>
<dbReference type="InterPro" id="IPR014721">
    <property type="entry name" value="Ribsml_uS5_D2-typ_fold_subgr"/>
</dbReference>
<dbReference type="NCBIfam" id="TIGR01021">
    <property type="entry name" value="rpsE_bact"/>
    <property type="match status" value="1"/>
</dbReference>
<dbReference type="PANTHER" id="PTHR48277">
    <property type="entry name" value="MITOCHONDRIAL RIBOSOMAL PROTEIN S5"/>
    <property type="match status" value="1"/>
</dbReference>
<dbReference type="PANTHER" id="PTHR48277:SF1">
    <property type="entry name" value="MITOCHONDRIAL RIBOSOMAL PROTEIN S5"/>
    <property type="match status" value="1"/>
</dbReference>
<dbReference type="Pfam" id="PF00333">
    <property type="entry name" value="Ribosomal_S5"/>
    <property type="match status" value="1"/>
</dbReference>
<dbReference type="Pfam" id="PF03719">
    <property type="entry name" value="Ribosomal_S5_C"/>
    <property type="match status" value="1"/>
</dbReference>
<dbReference type="SUPFAM" id="SSF54768">
    <property type="entry name" value="dsRNA-binding domain-like"/>
    <property type="match status" value="1"/>
</dbReference>
<dbReference type="SUPFAM" id="SSF54211">
    <property type="entry name" value="Ribosomal protein S5 domain 2-like"/>
    <property type="match status" value="1"/>
</dbReference>
<dbReference type="PROSITE" id="PS00585">
    <property type="entry name" value="RIBOSOMAL_S5"/>
    <property type="match status" value="1"/>
</dbReference>
<dbReference type="PROSITE" id="PS50881">
    <property type="entry name" value="S5_DSRBD"/>
    <property type="match status" value="1"/>
</dbReference>
<accession>A7Z0Q5</accession>
<reference key="1">
    <citation type="journal article" date="2007" name="Nat. Biotechnol.">
        <title>Comparative analysis of the complete genome sequence of the plant growth-promoting bacterium Bacillus amyloliquefaciens FZB42.</title>
        <authorList>
            <person name="Chen X.H."/>
            <person name="Koumoutsi A."/>
            <person name="Scholz R."/>
            <person name="Eisenreich A."/>
            <person name="Schneider K."/>
            <person name="Heinemeyer I."/>
            <person name="Morgenstern B."/>
            <person name="Voss B."/>
            <person name="Hess W.R."/>
            <person name="Reva O."/>
            <person name="Junge H."/>
            <person name="Voigt B."/>
            <person name="Jungblut P.R."/>
            <person name="Vater J."/>
            <person name="Suessmuth R."/>
            <person name="Liesegang H."/>
            <person name="Strittmatter A."/>
            <person name="Gottschalk G."/>
            <person name="Borriss R."/>
        </authorList>
    </citation>
    <scope>NUCLEOTIDE SEQUENCE [LARGE SCALE GENOMIC DNA]</scope>
    <source>
        <strain>DSM 23117 / BGSC 10A6 / LMG 26770 / FZB42</strain>
    </source>
</reference>
<protein>
    <recommendedName>
        <fullName evidence="1">Small ribosomal subunit protein uS5</fullName>
    </recommendedName>
    <alternativeName>
        <fullName evidence="2">30S ribosomal protein S5</fullName>
    </alternativeName>
</protein>
<comment type="function">
    <text evidence="1">With S4 and S12 plays an important role in translational accuracy.</text>
</comment>
<comment type="function">
    <text evidence="1">Located at the back of the 30S subunit body where it stabilizes the conformation of the head with respect to the body.</text>
</comment>
<comment type="subunit">
    <text evidence="1">Part of the 30S ribosomal subunit. Contacts proteins S4 and S8.</text>
</comment>
<comment type="domain">
    <text>The N-terminal domain interacts with the head of the 30S subunit; the C-terminal domain interacts with the body and contacts protein S4. The interaction surface between S4 and S5 is involved in control of translational fidelity.</text>
</comment>
<comment type="similarity">
    <text evidence="1">Belongs to the universal ribosomal protein uS5 family.</text>
</comment>
<organism>
    <name type="scientific">Bacillus velezensis (strain DSM 23117 / BGSC 10A6 / LMG 26770 / FZB42)</name>
    <name type="common">Bacillus amyloliquefaciens subsp. plantarum</name>
    <dbReference type="NCBI Taxonomy" id="326423"/>
    <lineage>
        <taxon>Bacteria</taxon>
        <taxon>Bacillati</taxon>
        <taxon>Bacillota</taxon>
        <taxon>Bacilli</taxon>
        <taxon>Bacillales</taxon>
        <taxon>Bacillaceae</taxon>
        <taxon>Bacillus</taxon>
        <taxon>Bacillus amyloliquefaciens group</taxon>
    </lineage>
</organism>